<organism>
    <name type="scientific">Bacillus pumilus (strain SAFR-032)</name>
    <dbReference type="NCBI Taxonomy" id="315750"/>
    <lineage>
        <taxon>Bacteria</taxon>
        <taxon>Bacillati</taxon>
        <taxon>Bacillota</taxon>
        <taxon>Bacilli</taxon>
        <taxon>Bacillales</taxon>
        <taxon>Bacillaceae</taxon>
        <taxon>Bacillus</taxon>
    </lineage>
</organism>
<sequence length="473" mass="52485">MSMKIGAKAFKERIGEGLEDTVMRGAVSSAQERLYERRLSASEELGNWEKWRELGEEIRQHTLAHLDDYLYQLSESVSARGGHVFFAKTKEEASAYIQHVAQKKEAKKIVKSKSMVTEEIEMNQALEEIGCEVVESDLGEYILQVDDHEPPSHIVAPALHMTKEQIREVFHEKLGYEMSETPEDMTSFVRAILREKFLEADMGVTGCNFAVANTGSICLVTNEGNADLVTAIPKTHIAVMGMERMVPTMEELDVLVGLLCRSAVGQKLTSYISVVGPKGEEEVDGPEEFHLVIVDNGRSNILGTAFQPVLQCIRCAACINVCPVYRHVGGHSYGSIYPGPIGAVLSPLLGGYDDYQELPFASSLCAACTDACPVKIPLHELLIKHRQVIVEKEGRAPKAEMMAMKMFGMGASTPGMYQFGTKAAPLLMNRMASNGQISKGIGPLKNWTDIRDLPAPSKERFRDWFKKRQKEEQ</sequence>
<reference key="1">
    <citation type="journal article" date="2007" name="PLoS ONE">
        <title>Paradoxical DNA repair and peroxide resistance gene conservation in Bacillus pumilus SAFR-032.</title>
        <authorList>
            <person name="Gioia J."/>
            <person name="Yerrapragada S."/>
            <person name="Qin X."/>
            <person name="Jiang H."/>
            <person name="Igboeli O.C."/>
            <person name="Muzny D."/>
            <person name="Dugan-Rocha S."/>
            <person name="Ding Y."/>
            <person name="Hawes A."/>
            <person name="Liu W."/>
            <person name="Perez L."/>
            <person name="Kovar C."/>
            <person name="Dinh H."/>
            <person name="Lee S."/>
            <person name="Nazareth L."/>
            <person name="Blyth P."/>
            <person name="Holder M."/>
            <person name="Buhay C."/>
            <person name="Tirumalai M.R."/>
            <person name="Liu Y."/>
            <person name="Dasgupta I."/>
            <person name="Bokhetache L."/>
            <person name="Fujita M."/>
            <person name="Karouia F."/>
            <person name="Eswara Moorthy P."/>
            <person name="Siefert J."/>
            <person name="Uzman A."/>
            <person name="Buzumbo P."/>
            <person name="Verma A."/>
            <person name="Zwiya H."/>
            <person name="McWilliams B.D."/>
            <person name="Olowu A."/>
            <person name="Clinkenbeard K.D."/>
            <person name="Newcombe D."/>
            <person name="Golebiewski L."/>
            <person name="Petrosino J.F."/>
            <person name="Nicholson W.L."/>
            <person name="Fox G.E."/>
            <person name="Venkateswaran K."/>
            <person name="Highlander S.K."/>
            <person name="Weinstock G.M."/>
        </authorList>
    </citation>
    <scope>NUCLEOTIDE SEQUENCE [LARGE SCALE GENOMIC DNA]</scope>
    <source>
        <strain>SAFR-032</strain>
    </source>
</reference>
<gene>
    <name evidence="1" type="primary">lutB</name>
    <name type="synonym">yvfW</name>
    <name type="ordered locus">BPUM_1673</name>
</gene>
<name>LUTB_BACP2</name>
<comment type="function">
    <text evidence="1">Is involved in L-lactate degradation and allows cells to grow with lactate as the sole carbon source. Has probably a role as an electron transporter during oxidation of L-lactate.</text>
</comment>
<comment type="similarity">
    <text evidence="1">Belongs to the LutB/YkgF family.</text>
</comment>
<protein>
    <recommendedName>
        <fullName evidence="1">Lactate utilization protein B</fullName>
    </recommendedName>
</protein>
<keyword id="KW-0004">4Fe-4S</keyword>
<keyword id="KW-0249">Electron transport</keyword>
<keyword id="KW-0408">Iron</keyword>
<keyword id="KW-0411">Iron-sulfur</keyword>
<keyword id="KW-0479">Metal-binding</keyword>
<keyword id="KW-0677">Repeat</keyword>
<keyword id="KW-0813">Transport</keyword>
<accession>A8FDN5</accession>
<evidence type="ECO:0000255" key="1">
    <source>
        <dbReference type="HAMAP-Rule" id="MF_02103"/>
    </source>
</evidence>
<proteinExistence type="inferred from homology"/>
<feature type="chain" id="PRO_0000383976" description="Lactate utilization protein B">
    <location>
        <begin position="1"/>
        <end position="473"/>
    </location>
</feature>
<feature type="domain" description="4Fe-4S ferredoxin-type 1" evidence="1">
    <location>
        <begin position="303"/>
        <end position="333"/>
    </location>
</feature>
<feature type="domain" description="4Fe-4S ferredoxin-type 2" evidence="1">
    <location>
        <begin position="352"/>
        <end position="381"/>
    </location>
</feature>
<feature type="binding site" evidence="1">
    <location>
        <position position="312"/>
    </location>
    <ligand>
        <name>[4Fe-4S] cluster</name>
        <dbReference type="ChEBI" id="CHEBI:49883"/>
        <label>1</label>
    </ligand>
</feature>
<feature type="binding site" evidence="1">
    <location>
        <position position="315"/>
    </location>
    <ligand>
        <name>[4Fe-4S] cluster</name>
        <dbReference type="ChEBI" id="CHEBI:49883"/>
        <label>1</label>
    </ligand>
</feature>
<feature type="binding site" evidence="1">
    <location>
        <position position="318"/>
    </location>
    <ligand>
        <name>[4Fe-4S] cluster</name>
        <dbReference type="ChEBI" id="CHEBI:49883"/>
        <label>1</label>
    </ligand>
</feature>
<feature type="binding site" evidence="1">
    <location>
        <position position="322"/>
    </location>
    <ligand>
        <name>[4Fe-4S] cluster</name>
        <dbReference type="ChEBI" id="CHEBI:49883"/>
        <label>2</label>
    </ligand>
</feature>
<feature type="binding site" evidence="1">
    <location>
        <position position="365"/>
    </location>
    <ligand>
        <name>[4Fe-4S] cluster</name>
        <dbReference type="ChEBI" id="CHEBI:49883"/>
        <label>2</label>
    </ligand>
</feature>
<feature type="binding site" evidence="1">
    <location>
        <position position="368"/>
    </location>
    <ligand>
        <name>[4Fe-4S] cluster</name>
        <dbReference type="ChEBI" id="CHEBI:49883"/>
        <label>2</label>
    </ligand>
</feature>
<feature type="binding site" evidence="1">
    <location>
        <position position="372"/>
    </location>
    <ligand>
        <name>[4Fe-4S] cluster</name>
        <dbReference type="ChEBI" id="CHEBI:49883"/>
        <label>1</label>
    </ligand>
</feature>
<dbReference type="EMBL" id="CP000813">
    <property type="protein sequence ID" value="ABV62352.1"/>
    <property type="molecule type" value="Genomic_DNA"/>
</dbReference>
<dbReference type="RefSeq" id="WP_012010084.1">
    <property type="nucleotide sequence ID" value="NC_009848.4"/>
</dbReference>
<dbReference type="STRING" id="315750.BPUM_1673"/>
<dbReference type="GeneID" id="5620934"/>
<dbReference type="KEGG" id="bpu:BPUM_1673"/>
<dbReference type="eggNOG" id="COG1139">
    <property type="taxonomic scope" value="Bacteria"/>
</dbReference>
<dbReference type="HOGENOM" id="CLU_027059_2_0_9"/>
<dbReference type="OrthoDB" id="9782337at2"/>
<dbReference type="Proteomes" id="UP000001355">
    <property type="component" value="Chromosome"/>
</dbReference>
<dbReference type="GO" id="GO:0051539">
    <property type="term" value="F:4 iron, 4 sulfur cluster binding"/>
    <property type="evidence" value="ECO:0007669"/>
    <property type="project" value="UniProtKB-KW"/>
</dbReference>
<dbReference type="GO" id="GO:0046872">
    <property type="term" value="F:metal ion binding"/>
    <property type="evidence" value="ECO:0007669"/>
    <property type="project" value="UniProtKB-KW"/>
</dbReference>
<dbReference type="GO" id="GO:0006089">
    <property type="term" value="P:lactate metabolic process"/>
    <property type="evidence" value="ECO:0007669"/>
    <property type="project" value="UniProtKB-UniRule"/>
</dbReference>
<dbReference type="Gene3D" id="1.10.1060.10">
    <property type="entry name" value="Alpha-helical ferredoxin"/>
    <property type="match status" value="1"/>
</dbReference>
<dbReference type="Gene3D" id="3.40.50.10420">
    <property type="entry name" value="NagB/RpiA/CoA transferase-like"/>
    <property type="match status" value="1"/>
</dbReference>
<dbReference type="HAMAP" id="MF_02103">
    <property type="entry name" value="LutB"/>
    <property type="match status" value="1"/>
</dbReference>
<dbReference type="InterPro" id="IPR017896">
    <property type="entry name" value="4Fe4S_Fe-S-bd"/>
</dbReference>
<dbReference type="InterPro" id="IPR017900">
    <property type="entry name" value="4Fe4S_Fe_S_CS"/>
</dbReference>
<dbReference type="InterPro" id="IPR024185">
    <property type="entry name" value="FTHF_cligase-like_sf"/>
</dbReference>
<dbReference type="InterPro" id="IPR009051">
    <property type="entry name" value="Helical_ferredxn"/>
</dbReference>
<dbReference type="InterPro" id="IPR003741">
    <property type="entry name" value="LUD_dom"/>
</dbReference>
<dbReference type="InterPro" id="IPR022825">
    <property type="entry name" value="LutB"/>
</dbReference>
<dbReference type="InterPro" id="IPR004452">
    <property type="entry name" value="LutB/LldF"/>
</dbReference>
<dbReference type="InterPro" id="IPR024569">
    <property type="entry name" value="LutB_C"/>
</dbReference>
<dbReference type="InterPro" id="IPR037171">
    <property type="entry name" value="NagB/RpiA_transferase-like"/>
</dbReference>
<dbReference type="NCBIfam" id="TIGR00273">
    <property type="entry name" value="LutB/LldF family L-lactate oxidation iron-sulfur protein"/>
    <property type="match status" value="1"/>
</dbReference>
<dbReference type="PANTHER" id="PTHR47153">
    <property type="entry name" value="LACTATE UTILIZATION PROTEIN B"/>
    <property type="match status" value="1"/>
</dbReference>
<dbReference type="PANTHER" id="PTHR47153:SF2">
    <property type="entry name" value="LACTATE UTILIZATION PROTEIN B"/>
    <property type="match status" value="1"/>
</dbReference>
<dbReference type="Pfam" id="PF13183">
    <property type="entry name" value="Fer4_8"/>
    <property type="match status" value="1"/>
</dbReference>
<dbReference type="Pfam" id="PF02589">
    <property type="entry name" value="LUD_dom"/>
    <property type="match status" value="1"/>
</dbReference>
<dbReference type="Pfam" id="PF11870">
    <property type="entry name" value="LutB_C"/>
    <property type="match status" value="1"/>
</dbReference>
<dbReference type="SUPFAM" id="SSF46548">
    <property type="entry name" value="alpha-helical ferredoxin"/>
    <property type="match status" value="1"/>
</dbReference>
<dbReference type="SUPFAM" id="SSF100950">
    <property type="entry name" value="NagB/RpiA/CoA transferase-like"/>
    <property type="match status" value="1"/>
</dbReference>
<dbReference type="PROSITE" id="PS00198">
    <property type="entry name" value="4FE4S_FER_1"/>
    <property type="match status" value="1"/>
</dbReference>